<keyword id="KW-0143">Chaperone</keyword>
<keyword id="KW-1015">Disulfide bond</keyword>
<keyword id="KW-0574">Periplasm</keyword>
<keyword id="KW-1185">Reference proteome</keyword>
<keyword id="KW-0732">Signal</keyword>
<name>HDEA_BRUC2</name>
<feature type="signal peptide" evidence="1">
    <location>
        <begin position="1"/>
        <end position="26"/>
    </location>
</feature>
<feature type="chain" id="PRO_0000338633" description="Probable acid stress chaperone HdeA">
    <location>
        <begin position="27"/>
        <end position="114"/>
    </location>
</feature>
<feature type="disulfide bond" evidence="1">
    <location>
        <begin position="46"/>
        <end position="94"/>
    </location>
</feature>
<evidence type="ECO:0000255" key="1">
    <source>
        <dbReference type="HAMAP-Rule" id="MF_00946"/>
    </source>
</evidence>
<comment type="function">
    <text evidence="1">Required for optimal acid stress protection. Exhibits a chaperone-like activity only at low pH by suppressing non-specifically the aggregation of denaturated periplasmic proteins.</text>
</comment>
<comment type="subcellular location">
    <subcellularLocation>
        <location evidence="1">Periplasm</location>
    </subcellularLocation>
</comment>
<comment type="similarity">
    <text evidence="1">Belongs to the HdeA family.</text>
</comment>
<proteinExistence type="inferred from homology"/>
<reference key="1">
    <citation type="submission" date="2007-10" db="EMBL/GenBank/DDBJ databases">
        <title>Brucella canis ATCC 23365 whole genome shotgun sequencing project.</title>
        <authorList>
            <person name="Setubal J.C."/>
            <person name="Bowns C."/>
            <person name="Boyle S."/>
            <person name="Crasta O.R."/>
            <person name="Czar M.J."/>
            <person name="Dharmanolla C."/>
            <person name="Gillespie J.J."/>
            <person name="Kenyon R.W."/>
            <person name="Lu J."/>
            <person name="Mane S."/>
            <person name="Mohapatra S."/>
            <person name="Nagrani S."/>
            <person name="Purkayastha A."/>
            <person name="Rajasimha H.K."/>
            <person name="Shallom J.M."/>
            <person name="Shallom S."/>
            <person name="Shukla M."/>
            <person name="Snyder E.E."/>
            <person name="Sobral B.W."/>
            <person name="Wattam A.R."/>
            <person name="Will R."/>
            <person name="Williams K."/>
            <person name="Yoo H."/>
            <person name="Bruce D."/>
            <person name="Detter C."/>
            <person name="Munk C."/>
            <person name="Brettin T.S."/>
        </authorList>
    </citation>
    <scope>NUCLEOTIDE SEQUENCE [LARGE SCALE GENOMIC DNA]</scope>
    <source>
        <strain>ATCC 23365 / NCTC 10854 / RM-666</strain>
    </source>
</reference>
<accession>A9ME89</accession>
<dbReference type="EMBL" id="CP000873">
    <property type="protein sequence ID" value="ABX63527.1"/>
    <property type="molecule type" value="Genomic_DNA"/>
</dbReference>
<dbReference type="RefSeq" id="WP_002966248.1">
    <property type="nucleotide sequence ID" value="NC_010104.1"/>
</dbReference>
<dbReference type="SMR" id="A9ME89"/>
<dbReference type="GeneID" id="93015292"/>
<dbReference type="KEGG" id="bcs:BCAN_B0343"/>
<dbReference type="HOGENOM" id="CLU_170142_0_0_5"/>
<dbReference type="PhylomeDB" id="A9ME89"/>
<dbReference type="Proteomes" id="UP000001385">
    <property type="component" value="Chromosome II"/>
</dbReference>
<dbReference type="GO" id="GO:0030288">
    <property type="term" value="C:outer membrane-bounded periplasmic space"/>
    <property type="evidence" value="ECO:0007669"/>
    <property type="project" value="InterPro"/>
</dbReference>
<dbReference type="GO" id="GO:1990451">
    <property type="term" value="P:cellular stress response to acidic pH"/>
    <property type="evidence" value="ECO:0007669"/>
    <property type="project" value="UniProtKB-UniRule"/>
</dbReference>
<dbReference type="Gene3D" id="1.10.890.10">
    <property type="entry name" value="HNS-dependent expression A"/>
    <property type="match status" value="1"/>
</dbReference>
<dbReference type="HAMAP" id="MF_00946">
    <property type="entry name" value="HdeA"/>
    <property type="match status" value="1"/>
</dbReference>
<dbReference type="InterPro" id="IPR024972">
    <property type="entry name" value="HdeA"/>
</dbReference>
<dbReference type="InterPro" id="IPR038303">
    <property type="entry name" value="HdeA/HdeB_sf"/>
</dbReference>
<dbReference type="InterPro" id="IPR036831">
    <property type="entry name" value="HdeA_sf"/>
</dbReference>
<dbReference type="InterPro" id="IPR010486">
    <property type="entry name" value="HNS-dep_expression_A/B"/>
</dbReference>
<dbReference type="NCBIfam" id="NF007576">
    <property type="entry name" value="PRK10208.1"/>
    <property type="match status" value="1"/>
</dbReference>
<dbReference type="Pfam" id="PF06411">
    <property type="entry name" value="HdeA"/>
    <property type="match status" value="1"/>
</dbReference>
<dbReference type="PIRSF" id="PIRSF009564">
    <property type="entry name" value="HNS-dep_expression_A"/>
    <property type="match status" value="1"/>
</dbReference>
<dbReference type="SUPFAM" id="SSF47752">
    <property type="entry name" value="Protein HNS-dependent expression A, HdeA"/>
    <property type="match status" value="1"/>
</dbReference>
<organism>
    <name type="scientific">Brucella canis (strain ATCC 23365 / NCTC 10854 / RM-666)</name>
    <dbReference type="NCBI Taxonomy" id="483179"/>
    <lineage>
        <taxon>Bacteria</taxon>
        <taxon>Pseudomonadati</taxon>
        <taxon>Pseudomonadota</taxon>
        <taxon>Alphaproteobacteria</taxon>
        <taxon>Hyphomicrobiales</taxon>
        <taxon>Brucellaceae</taxon>
        <taxon>Brucella/Ochrobactrum group</taxon>
        <taxon>Brucella</taxon>
    </lineage>
</organism>
<gene>
    <name evidence="1" type="primary">hdeA</name>
    <name type="ordered locus">BCAN_B0343</name>
</gene>
<protein>
    <recommendedName>
        <fullName evidence="1">Probable acid stress chaperone HdeA</fullName>
    </recommendedName>
</protein>
<sequence length="114" mass="12332">MIKALFNKNTALAAVAILALSGGAMAESAKTHKTDMAKKKVSELTCEDFNGLEESFKPTVVGWVVGFNKKGKEEDAVIDVDGIETVTPAIIEACKQEPKASFWKKAEAELKKVF</sequence>